<keyword id="KW-0687">Ribonucleoprotein</keyword>
<keyword id="KW-0689">Ribosomal protein</keyword>
<keyword id="KW-0694">RNA-binding</keyword>
<keyword id="KW-0699">rRNA-binding</keyword>
<reference key="1">
    <citation type="journal article" date="2009" name="BMC Genomics">
        <title>Pseudogene accumulation in the evolutionary histories of Salmonella enterica serovars Paratyphi A and Typhi.</title>
        <authorList>
            <person name="Holt K.E."/>
            <person name="Thomson N.R."/>
            <person name="Wain J."/>
            <person name="Langridge G.C."/>
            <person name="Hasan R."/>
            <person name="Bhutta Z.A."/>
            <person name="Quail M.A."/>
            <person name="Norbertczak H."/>
            <person name="Walker D."/>
            <person name="Simmonds M."/>
            <person name="White B."/>
            <person name="Bason N."/>
            <person name="Mungall K."/>
            <person name="Dougan G."/>
            <person name="Parkhill J."/>
        </authorList>
    </citation>
    <scope>NUCLEOTIDE SEQUENCE [LARGE SCALE GENOMIC DNA]</scope>
    <source>
        <strain>AKU_12601</strain>
    </source>
</reference>
<name>RS19_SALPK</name>
<sequence length="92" mass="10416">MPRSLKKGPFIDLHLLKKVEKAVESGDKKPLRTWSRRSTIFPNMIGLTIAVHNGRQHVPVFVSDEMVGHKLGEFAPTRTYRGHAADKKAKKK</sequence>
<gene>
    <name evidence="1" type="primary">rpsS</name>
    <name type="ordered locus">SSPA3081</name>
</gene>
<protein>
    <recommendedName>
        <fullName evidence="1">Small ribosomal subunit protein uS19</fullName>
    </recommendedName>
    <alternativeName>
        <fullName evidence="2">30S ribosomal protein S19</fullName>
    </alternativeName>
</protein>
<comment type="function">
    <text evidence="1">Protein S19 forms a complex with S13 that binds strongly to the 16S ribosomal RNA.</text>
</comment>
<comment type="similarity">
    <text evidence="1">Belongs to the universal ribosomal protein uS19 family.</text>
</comment>
<organism>
    <name type="scientific">Salmonella paratyphi A (strain AKU_12601)</name>
    <dbReference type="NCBI Taxonomy" id="554290"/>
    <lineage>
        <taxon>Bacteria</taxon>
        <taxon>Pseudomonadati</taxon>
        <taxon>Pseudomonadota</taxon>
        <taxon>Gammaproteobacteria</taxon>
        <taxon>Enterobacterales</taxon>
        <taxon>Enterobacteriaceae</taxon>
        <taxon>Salmonella</taxon>
    </lineage>
</organism>
<accession>B5BGY2</accession>
<feature type="chain" id="PRO_1000128034" description="Small ribosomal subunit protein uS19">
    <location>
        <begin position="1"/>
        <end position="92"/>
    </location>
</feature>
<proteinExistence type="inferred from homology"/>
<dbReference type="EMBL" id="FM200053">
    <property type="protein sequence ID" value="CAR61332.1"/>
    <property type="molecule type" value="Genomic_DNA"/>
</dbReference>
<dbReference type="RefSeq" id="WP_001138115.1">
    <property type="nucleotide sequence ID" value="NC_011147.1"/>
</dbReference>
<dbReference type="SMR" id="B5BGY2"/>
<dbReference type="GeneID" id="97603665"/>
<dbReference type="KEGG" id="sek:SSPA3081"/>
<dbReference type="HOGENOM" id="CLU_144911_0_1_6"/>
<dbReference type="Proteomes" id="UP000001869">
    <property type="component" value="Chromosome"/>
</dbReference>
<dbReference type="GO" id="GO:0005737">
    <property type="term" value="C:cytoplasm"/>
    <property type="evidence" value="ECO:0007669"/>
    <property type="project" value="UniProtKB-ARBA"/>
</dbReference>
<dbReference type="GO" id="GO:0015935">
    <property type="term" value="C:small ribosomal subunit"/>
    <property type="evidence" value="ECO:0007669"/>
    <property type="project" value="InterPro"/>
</dbReference>
<dbReference type="GO" id="GO:0019843">
    <property type="term" value="F:rRNA binding"/>
    <property type="evidence" value="ECO:0007669"/>
    <property type="project" value="UniProtKB-UniRule"/>
</dbReference>
<dbReference type="GO" id="GO:0003735">
    <property type="term" value="F:structural constituent of ribosome"/>
    <property type="evidence" value="ECO:0007669"/>
    <property type="project" value="InterPro"/>
</dbReference>
<dbReference type="GO" id="GO:0000028">
    <property type="term" value="P:ribosomal small subunit assembly"/>
    <property type="evidence" value="ECO:0007669"/>
    <property type="project" value="TreeGrafter"/>
</dbReference>
<dbReference type="GO" id="GO:0006412">
    <property type="term" value="P:translation"/>
    <property type="evidence" value="ECO:0007669"/>
    <property type="project" value="UniProtKB-UniRule"/>
</dbReference>
<dbReference type="FunFam" id="3.30.860.10:FF:000001">
    <property type="entry name" value="30S ribosomal protein S19"/>
    <property type="match status" value="1"/>
</dbReference>
<dbReference type="Gene3D" id="3.30.860.10">
    <property type="entry name" value="30s Ribosomal Protein S19, Chain A"/>
    <property type="match status" value="1"/>
</dbReference>
<dbReference type="HAMAP" id="MF_00531">
    <property type="entry name" value="Ribosomal_uS19"/>
    <property type="match status" value="1"/>
</dbReference>
<dbReference type="InterPro" id="IPR002222">
    <property type="entry name" value="Ribosomal_uS19"/>
</dbReference>
<dbReference type="InterPro" id="IPR005732">
    <property type="entry name" value="Ribosomal_uS19_bac-type"/>
</dbReference>
<dbReference type="InterPro" id="IPR020934">
    <property type="entry name" value="Ribosomal_uS19_CS"/>
</dbReference>
<dbReference type="InterPro" id="IPR023575">
    <property type="entry name" value="Ribosomal_uS19_SF"/>
</dbReference>
<dbReference type="NCBIfam" id="TIGR01050">
    <property type="entry name" value="rpsS_bact"/>
    <property type="match status" value="1"/>
</dbReference>
<dbReference type="PANTHER" id="PTHR11880">
    <property type="entry name" value="RIBOSOMAL PROTEIN S19P FAMILY MEMBER"/>
    <property type="match status" value="1"/>
</dbReference>
<dbReference type="PANTHER" id="PTHR11880:SF8">
    <property type="entry name" value="SMALL RIBOSOMAL SUBUNIT PROTEIN US19M"/>
    <property type="match status" value="1"/>
</dbReference>
<dbReference type="Pfam" id="PF00203">
    <property type="entry name" value="Ribosomal_S19"/>
    <property type="match status" value="1"/>
</dbReference>
<dbReference type="PIRSF" id="PIRSF002144">
    <property type="entry name" value="Ribosomal_S19"/>
    <property type="match status" value="1"/>
</dbReference>
<dbReference type="PRINTS" id="PR00975">
    <property type="entry name" value="RIBOSOMALS19"/>
</dbReference>
<dbReference type="SUPFAM" id="SSF54570">
    <property type="entry name" value="Ribosomal protein S19"/>
    <property type="match status" value="1"/>
</dbReference>
<dbReference type="PROSITE" id="PS00323">
    <property type="entry name" value="RIBOSOMAL_S19"/>
    <property type="match status" value="1"/>
</dbReference>
<evidence type="ECO:0000255" key="1">
    <source>
        <dbReference type="HAMAP-Rule" id="MF_00531"/>
    </source>
</evidence>
<evidence type="ECO:0000305" key="2"/>